<proteinExistence type="evidence at protein level"/>
<keyword id="KW-0002">3D-structure</keyword>
<keyword id="KW-0285">Flavoprotein</keyword>
<keyword id="KW-0288">FMN</keyword>
<keyword id="KW-0520">NAD</keyword>
<keyword id="KW-0521">NADP</keyword>
<keyword id="KW-0547">Nucleotide-binding</keyword>
<keyword id="KW-0560">Oxidoreductase</keyword>
<keyword id="KW-1185">Reference proteome</keyword>
<reference key="1">
    <citation type="journal article" date="2007" name="J. Bacteriol.">
        <title>The genome sequence of avian pathogenic Escherichia coli strain O1:K1:H7 shares strong similarities with human extraintestinal pathogenic E. coli genomes.</title>
        <authorList>
            <person name="Johnson T.J."/>
            <person name="Kariyawasam S."/>
            <person name="Wannemuehler Y."/>
            <person name="Mangiamele P."/>
            <person name="Johnson S.J."/>
            <person name="Doetkott C."/>
            <person name="Skyberg J.A."/>
            <person name="Lynne A.M."/>
            <person name="Johnson J.R."/>
            <person name="Nolan L.K."/>
        </authorList>
    </citation>
    <scope>NUCLEOTIDE SEQUENCE [LARGE SCALE GENOMIC DNA]</scope>
</reference>
<reference key="2">
    <citation type="submission" date="2012-02" db="PDB data bank">
        <title>High resolution structure of E.coli wrba with FMN.</title>
        <authorList>
            <person name="Kishko I."/>
            <person name="Brynda J."/>
            <person name="Kuta Smatanova I."/>
            <person name="Ettrich R."/>
            <person name="Carey J."/>
        </authorList>
    </citation>
    <scope>X-RAY CRYSTALLOGRAPHY (1.20 ANGSTROMS) IN COMPLEX WITH FMN</scope>
    <scope>COFACTOR</scope>
    <scope>SUBUNIT</scope>
</reference>
<feature type="chain" id="PRO_0000291014" description="NAD(P)H dehydrogenase (quinone)">
    <location>
        <begin position="1"/>
        <end position="198"/>
    </location>
</feature>
<feature type="domain" description="Flavodoxin-like" evidence="1">
    <location>
        <begin position="4"/>
        <end position="189"/>
    </location>
</feature>
<feature type="binding site" evidence="1 2">
    <location>
        <begin position="10"/>
        <end position="15"/>
    </location>
    <ligand>
        <name>FMN</name>
        <dbReference type="ChEBI" id="CHEBI:58210"/>
    </ligand>
</feature>
<feature type="binding site" evidence="1">
    <location>
        <position position="12"/>
    </location>
    <ligand>
        <name>NAD(+)</name>
        <dbReference type="ChEBI" id="CHEBI:57540"/>
    </ligand>
</feature>
<feature type="binding site" evidence="1 2">
    <location>
        <begin position="78"/>
        <end position="80"/>
    </location>
    <ligand>
        <name>FMN</name>
        <dbReference type="ChEBI" id="CHEBI:58210"/>
    </ligand>
</feature>
<feature type="binding site" evidence="1">
    <location>
        <position position="98"/>
    </location>
    <ligand>
        <name>substrate</name>
    </ligand>
</feature>
<feature type="binding site" evidence="1 2">
    <location>
        <begin position="113"/>
        <end position="118"/>
    </location>
    <ligand>
        <name>FMN</name>
        <dbReference type="ChEBI" id="CHEBI:58210"/>
    </ligand>
</feature>
<feature type="binding site" evidence="1 2">
    <location>
        <position position="133"/>
    </location>
    <ligand>
        <name>FMN</name>
        <dbReference type="ChEBI" id="CHEBI:58210"/>
    </ligand>
</feature>
<sequence length="198" mass="20846">MAKVLVLYYSMYGHIETMARAVAEGASKVDGAEVVVKRVPETMPPQLFEKAGGKTQTAPVATPQELADYDAIIFGTPTRFGNMSGQMRTFLDQTGGLWASGALYGKLASVFSSTGTGGGQEQTITSTWTTLAHHGMVIVPIGYAAQELFDVSQVRGGTPYGATTIAGGDGSRQPSQEELSIARYQGEYVAGLAVKLNG</sequence>
<name>NQOR_ECOK1</name>
<organism>
    <name type="scientific">Escherichia coli O1:K1 / APEC</name>
    <dbReference type="NCBI Taxonomy" id="405955"/>
    <lineage>
        <taxon>Bacteria</taxon>
        <taxon>Pseudomonadati</taxon>
        <taxon>Pseudomonadota</taxon>
        <taxon>Gammaproteobacteria</taxon>
        <taxon>Enterobacterales</taxon>
        <taxon>Enterobacteriaceae</taxon>
        <taxon>Escherichia</taxon>
    </lineage>
</organism>
<evidence type="ECO:0000255" key="1">
    <source>
        <dbReference type="HAMAP-Rule" id="MF_01017"/>
    </source>
</evidence>
<evidence type="ECO:0000269" key="2">
    <source ref="2"/>
</evidence>
<comment type="catalytic activity">
    <reaction evidence="1">
        <text>a quinone + NADH + H(+) = a quinol + NAD(+)</text>
        <dbReference type="Rhea" id="RHEA:46160"/>
        <dbReference type="ChEBI" id="CHEBI:15378"/>
        <dbReference type="ChEBI" id="CHEBI:24646"/>
        <dbReference type="ChEBI" id="CHEBI:57540"/>
        <dbReference type="ChEBI" id="CHEBI:57945"/>
        <dbReference type="ChEBI" id="CHEBI:132124"/>
        <dbReference type="EC" id="1.6.5.2"/>
    </reaction>
</comment>
<comment type="catalytic activity">
    <reaction evidence="1">
        <text>a quinone + NADPH + H(+) = a quinol + NADP(+)</text>
        <dbReference type="Rhea" id="RHEA:46164"/>
        <dbReference type="ChEBI" id="CHEBI:15378"/>
        <dbReference type="ChEBI" id="CHEBI:24646"/>
        <dbReference type="ChEBI" id="CHEBI:57783"/>
        <dbReference type="ChEBI" id="CHEBI:58349"/>
        <dbReference type="ChEBI" id="CHEBI:132124"/>
        <dbReference type="EC" id="1.6.5.2"/>
    </reaction>
</comment>
<comment type="cofactor">
    <cofactor evidence="1 2">
        <name>FMN</name>
        <dbReference type="ChEBI" id="CHEBI:58210"/>
    </cofactor>
    <text evidence="1 2">Binds 1 FMN per monomer.</text>
</comment>
<comment type="subunit">
    <text evidence="2">Homodimer and homotetramer; in equilibrium.</text>
</comment>
<comment type="similarity">
    <text evidence="1">Belongs to the WrbA family.</text>
</comment>
<accession>A1A9Q9</accession>
<dbReference type="EC" id="1.6.5.2" evidence="1"/>
<dbReference type="EMBL" id="CP000468">
    <property type="protein sequence ID" value="ABJ00399.1"/>
    <property type="molecule type" value="Genomic_DNA"/>
</dbReference>
<dbReference type="PDB" id="4DY4">
    <property type="method" value="X-ray"/>
    <property type="resolution" value="1.20 A"/>
    <property type="chains" value="A/C=2-198"/>
</dbReference>
<dbReference type="PDBsum" id="4DY4"/>
<dbReference type="SMR" id="A1A9Q9"/>
<dbReference type="KEGG" id="ecv:APECO1_95"/>
<dbReference type="HOGENOM" id="CLU_051402_0_2_6"/>
<dbReference type="Proteomes" id="UP000008216">
    <property type="component" value="Chromosome"/>
</dbReference>
<dbReference type="GO" id="GO:0016020">
    <property type="term" value="C:membrane"/>
    <property type="evidence" value="ECO:0007669"/>
    <property type="project" value="TreeGrafter"/>
</dbReference>
<dbReference type="GO" id="GO:0050660">
    <property type="term" value="F:flavin adenine dinucleotide binding"/>
    <property type="evidence" value="ECO:0007669"/>
    <property type="project" value="UniProtKB-UniRule"/>
</dbReference>
<dbReference type="GO" id="GO:0010181">
    <property type="term" value="F:FMN binding"/>
    <property type="evidence" value="ECO:0007669"/>
    <property type="project" value="InterPro"/>
</dbReference>
<dbReference type="GO" id="GO:0051287">
    <property type="term" value="F:NAD binding"/>
    <property type="evidence" value="ECO:0007669"/>
    <property type="project" value="UniProtKB-UniRule"/>
</dbReference>
<dbReference type="GO" id="GO:0050136">
    <property type="term" value="F:NADH:ubiquinone reductase (non-electrogenic) activity"/>
    <property type="evidence" value="ECO:0007669"/>
    <property type="project" value="RHEA"/>
</dbReference>
<dbReference type="GO" id="GO:0050661">
    <property type="term" value="F:NADP binding"/>
    <property type="evidence" value="ECO:0007669"/>
    <property type="project" value="UniProtKB-UniRule"/>
</dbReference>
<dbReference type="GO" id="GO:0008753">
    <property type="term" value="F:NADPH dehydrogenase (quinone) activity"/>
    <property type="evidence" value="ECO:0007669"/>
    <property type="project" value="RHEA"/>
</dbReference>
<dbReference type="FunFam" id="3.40.50.360:FF:000004">
    <property type="entry name" value="NAD(P)H dehydrogenase (quinone)"/>
    <property type="match status" value="1"/>
</dbReference>
<dbReference type="Gene3D" id="3.40.50.360">
    <property type="match status" value="1"/>
</dbReference>
<dbReference type="HAMAP" id="MF_01017">
    <property type="entry name" value="NQOR"/>
    <property type="match status" value="1"/>
</dbReference>
<dbReference type="InterPro" id="IPR008254">
    <property type="entry name" value="Flavodoxin/NO_synth"/>
</dbReference>
<dbReference type="InterPro" id="IPR029039">
    <property type="entry name" value="Flavoprotein-like_sf"/>
</dbReference>
<dbReference type="InterPro" id="IPR010089">
    <property type="entry name" value="Flavoprotein_WrbA-like"/>
</dbReference>
<dbReference type="InterPro" id="IPR005025">
    <property type="entry name" value="FMN_Rdtase-like_dom"/>
</dbReference>
<dbReference type="InterPro" id="IPR037513">
    <property type="entry name" value="NQO"/>
</dbReference>
<dbReference type="NCBIfam" id="TIGR01755">
    <property type="entry name" value="flav_wrbA"/>
    <property type="match status" value="1"/>
</dbReference>
<dbReference type="NCBIfam" id="NF002999">
    <property type="entry name" value="PRK03767.1"/>
    <property type="match status" value="1"/>
</dbReference>
<dbReference type="PANTHER" id="PTHR30546">
    <property type="entry name" value="FLAVODOXIN-RELATED PROTEIN WRBA-RELATED"/>
    <property type="match status" value="1"/>
</dbReference>
<dbReference type="PANTHER" id="PTHR30546:SF23">
    <property type="entry name" value="FLAVOPROTEIN-LIKE PROTEIN YCP4-RELATED"/>
    <property type="match status" value="1"/>
</dbReference>
<dbReference type="Pfam" id="PF03358">
    <property type="entry name" value="FMN_red"/>
    <property type="match status" value="1"/>
</dbReference>
<dbReference type="SUPFAM" id="SSF52218">
    <property type="entry name" value="Flavoproteins"/>
    <property type="match status" value="1"/>
</dbReference>
<dbReference type="PROSITE" id="PS50902">
    <property type="entry name" value="FLAVODOXIN_LIKE"/>
    <property type="match status" value="1"/>
</dbReference>
<protein>
    <recommendedName>
        <fullName evidence="1">NAD(P)H dehydrogenase (quinone)</fullName>
        <ecNumber evidence="1">1.6.5.2</ecNumber>
    </recommendedName>
    <alternativeName>
        <fullName>Flavoprotein WrbA</fullName>
    </alternativeName>
    <alternativeName>
        <fullName evidence="1">NAD(P)H:quinone oxidoreductase</fullName>
        <shortName evidence="1">NQO</shortName>
    </alternativeName>
</protein>
<gene>
    <name type="ordered locus">Ecok1_09050</name>
    <name type="ORF">APECO1_95</name>
</gene>